<name>HEMA_INBBO</name>
<accession>P10448</accession>
<feature type="chain" id="PRO_0000440758" description="Hemagglutinin HA1 chain" evidence="1">
    <location>
        <begin position="1"/>
        <end position="352"/>
    </location>
</feature>
<feature type="chain" id="PRO_0000039090" description="Hemagglutinin HA2 chain" evidence="1">
    <location>
        <begin position="353"/>
        <end position="575"/>
    </location>
</feature>
<feature type="topological domain" description="Extracellular" evidence="1">
    <location>
        <begin position="1"/>
        <end position="543"/>
    </location>
</feature>
<feature type="transmembrane region" description="Helical" evidence="1">
    <location>
        <begin position="544"/>
        <end position="564"/>
    </location>
</feature>
<feature type="topological domain" description="Cytoplasmic" evidence="1">
    <location>
        <begin position="565"/>
        <end position="575"/>
    </location>
</feature>
<feature type="site" description="Cleavage; by host" evidence="1">
    <location>
        <begin position="352"/>
        <end position="353"/>
    </location>
</feature>
<feature type="lipid moiety-binding region" description="S-palmitoyl cysteine; by host" evidence="1">
    <location>
        <position position="571"/>
    </location>
</feature>
<feature type="lipid moiety-binding region" description="S-palmitoyl cysteine; by host" evidence="1">
    <location>
        <position position="574"/>
    </location>
</feature>
<feature type="glycosylation site" description="N-linked (GlcNAc...) asparagine; by host" evidence="1">
    <location>
        <position position="33"/>
    </location>
</feature>
<feature type="glycosylation site" description="N-linked (GlcNAc...) asparagine; by host" evidence="1">
    <location>
        <position position="67"/>
    </location>
</feature>
<feature type="glycosylation site" description="N-linked (GlcNAc...) asparagine; by host" evidence="1">
    <location>
        <position position="153"/>
    </location>
</feature>
<feature type="glycosylation site" description="N-linked (GlcNAc...) asparagine; by host" evidence="1">
    <location>
        <position position="156"/>
    </location>
</feature>
<feature type="glycosylation site" description="N-linked (GlcNAc...) asparagine; by host" evidence="1">
    <location>
        <position position="171"/>
    </location>
</feature>
<feature type="glycosylation site" description="N-linked (GlcNAc...) asparagine; by host" evidence="1">
    <location>
        <position position="238"/>
    </location>
</feature>
<feature type="glycosylation site" description="N-linked (GlcNAc...) asparagine; by host" evidence="1">
    <location>
        <position position="309"/>
    </location>
</feature>
<feature type="glycosylation site" description="N-linked (GlcNAc...) asparagine; by host" evidence="1">
    <location>
        <position position="338"/>
    </location>
</feature>
<feature type="glycosylation site" description="N-linked (GlcNAc...) asparagine; by host" evidence="1">
    <location>
        <position position="497"/>
    </location>
</feature>
<feature type="glycosylation site" description="N-linked (GlcNAc...) asparagine; by host" evidence="1">
    <location>
        <position position="523"/>
    </location>
</feature>
<feature type="glycosylation site" description="N-linked (GlcNAc...) asparagine; by host" evidence="1">
    <location>
        <position position="536"/>
    </location>
</feature>
<feature type="disulfide bond" description="Interchain (between HA1 and HA2 chains)" evidence="1">
    <location>
        <begin position="12"/>
        <end position="489"/>
    </location>
</feature>
<feature type="disulfide bond" evidence="1">
    <location>
        <begin position="68"/>
        <end position="80"/>
    </location>
</feature>
<feature type="disulfide bond" evidence="1">
    <location>
        <begin position="102"/>
        <end position="151"/>
    </location>
</feature>
<feature type="disulfide bond" evidence="1">
    <location>
        <begin position="496"/>
        <end position="500"/>
    </location>
</feature>
<feature type="non-terminal residue">
    <location>
        <position position="1"/>
    </location>
</feature>
<organismHost>
    <name type="scientific">Homo sapiens</name>
    <name type="common">Human</name>
    <dbReference type="NCBI Taxonomy" id="9606"/>
</organismHost>
<organism>
    <name type="scientific">Influenza B virus (strain B/Bonn/1943)</name>
    <dbReference type="NCBI Taxonomy" id="230285"/>
    <lineage>
        <taxon>Viruses</taxon>
        <taxon>Riboviria</taxon>
        <taxon>Orthornavirae</taxon>
        <taxon>Negarnaviricota</taxon>
        <taxon>Polyploviricotina</taxon>
        <taxon>Insthoviricetes</taxon>
        <taxon>Articulavirales</taxon>
        <taxon>Orthomyxoviridae</taxon>
        <taxon>Betainfluenzavirus</taxon>
        <taxon>Betainfluenzavirus influenzae</taxon>
        <taxon>Influenza B virus</taxon>
    </lineage>
</organism>
<gene>
    <name evidence="1" type="primary">HA</name>
</gene>
<proteinExistence type="inferred from homology"/>
<comment type="function">
    <text evidence="1">Binds to sialic acid-containing receptors on the cell surface, bringing about the attachment of the virus particle to the cell. Plays a major role in the determination of host range restriction and virulence. Class I viral fusion protein. Responsible for penetration of the virus into the cell cytoplasm by mediating the fusion of the membrane of the endocytosed virus particle with the endosomal membrane. Low pH in endosomes induce an irreversible conformational change in HA2, releasing the fusion hydrophobic peptide. Several trimers are required to form a competent fusion pore.</text>
</comment>
<comment type="subunit">
    <text evidence="1">Homotrimer of disulfide-linked HA1-HA2.</text>
</comment>
<comment type="subcellular location">
    <subcellularLocation>
        <location evidence="1">Virion membrane</location>
        <topology evidence="1">Single-pass type I membrane protein</topology>
    </subcellularLocation>
    <subcellularLocation>
        <location evidence="1">Host apical cell membrane</location>
        <topology evidence="1">Single-pass type I membrane protein</topology>
    </subcellularLocation>
    <text evidence="1">Targeted to the apical plasma membrane in epithelial polarized cells through a signal present in the transmembrane domain. Associated with glycosphingolipid- and cholesterol-enriched detergent-resistant lipid rafts.</text>
</comment>
<comment type="PTM">
    <text evidence="1">Palmitoylated.</text>
</comment>
<comment type="PTM">
    <text evidence="1">In natural infection, inactive HA is matured into HA1 and HA2 outside the cell by one or more trypsin-like, arginine-specific endoprotease secreted by the bronchial epithelial cells. One identified protease that may be involved in this process is secreted in lungs by club cells.</text>
</comment>
<comment type="miscellaneous">
    <text>Major glycoprotein, comprises over 80% of the envelope proteins present in virus particle.</text>
</comment>
<comment type="miscellaneous">
    <text>The extent of infection into host organism is determined by HA. Influenza viruses bud from the apical surface of polarized epithelial cells (e.g. bronchial epithelial cells) into lumen of lungs and are therefore usually pneumotropic. The reason is that HA is cleaved by tryptase clara which is restricted to lungs. However, HAs of H5 and H7 pantropic avian viruses subtypes can be cleaved by furin and subtilisin-type enzymes, allowing the virus to grow in other organs than lungs.</text>
</comment>
<comment type="miscellaneous">
    <text>The influenza B genome consist of 8 RNA segments. Genetic variation of hemagglutinin and/or neuraminidase genes results in the emergence of new influenza strains. The mechanism of variation can be the result of point mutations or the result of genetic reassortment between segments of two different strains.</text>
</comment>
<comment type="similarity">
    <text evidence="1">Belongs to the influenza viruses hemagglutinin family.</text>
</comment>
<evidence type="ECO:0000255" key="1">
    <source>
        <dbReference type="HAMAP-Rule" id="MF_04072"/>
    </source>
</evidence>
<sequence>LMVVTSNADRICTGITSSNSPHVVKTATQGEVNVTGVIPLTTTPTRSHFANLKGTQTRGKLCPNCFNCTDLDVALGRPKCMGNIPSAKVSVLHEVKPVTSGCFPIMHDRTKIRQLPNLLRGYENIRLSTSNVISAETAPGGPYKIGTSGSCPNVTNGSGFFETMAWAVPKNKTAMNPVTVEVPYICAKGEDQITVWGFHSDSETQMGRLYGDSNPQKFTSYANGVTTHYVSQIGGFPNQTEDEGLKQSGRIVVDYIVQKPEKPGTIVYQRGILLPQKVWCASGRSKVIKGSLPLIGEADCLHEKYGGLNKSKPYYTGEHAKAIGNCPIWVKTPLKLANGTKYRPPAKLLKERGFFGAIAGFLEGGWEGMIDGWHGYTSHGAHGVAVAADLKSTQEAINKITKNLNSLSELEVKNLQRLSGEMDGLHNEILELDEKVDDLRADTISSQIELAVLLSNEGIINSEDEHLLALERKLKKMLGPSAVDIGNGCFETKHKCNQTCLDRIAARTFSAGEFSLPTFDSLNITAASLNDDGLDNHTILLYYSTAASSLAVTLMIAIFIVYMVSRDNVSCSICL</sequence>
<keyword id="KW-1015">Disulfide bond</keyword>
<keyword id="KW-1170">Fusion of virus membrane with host endosomal membrane</keyword>
<keyword id="KW-1168">Fusion of virus membrane with host membrane</keyword>
<keyword id="KW-0325">Glycoprotein</keyword>
<keyword id="KW-0348">Hemagglutinin</keyword>
<keyword id="KW-1032">Host cell membrane</keyword>
<keyword id="KW-1043">Host membrane</keyword>
<keyword id="KW-0945">Host-virus interaction</keyword>
<keyword id="KW-0449">Lipoprotein</keyword>
<keyword id="KW-0472">Membrane</keyword>
<keyword id="KW-0564">Palmitate</keyword>
<keyword id="KW-0812">Transmembrane</keyword>
<keyword id="KW-1133">Transmembrane helix</keyword>
<keyword id="KW-1161">Viral attachment to host cell</keyword>
<keyword id="KW-0261">Viral envelope protein</keyword>
<keyword id="KW-1162">Viral penetration into host cytoplasm</keyword>
<keyword id="KW-0946">Virion</keyword>
<keyword id="KW-1164">Virus endocytosis by host</keyword>
<keyword id="KW-1160">Virus entry into host cell</keyword>
<protein>
    <recommendedName>
        <fullName evidence="1">Hemagglutinin</fullName>
    </recommendedName>
    <component>
        <recommendedName>
            <fullName evidence="1">Hemagglutinin HA1 chain</fullName>
        </recommendedName>
    </component>
    <component>
        <recommendedName>
            <fullName evidence="1">Hemagglutinin HA2 chain</fullName>
        </recommendedName>
    </component>
</protein>
<dbReference type="EMBL" id="X13550">
    <property type="protein sequence ID" value="CAA31902.1"/>
    <property type="molecule type" value="Genomic_RNA"/>
</dbReference>
<dbReference type="PIR" id="S01882">
    <property type="entry name" value="S01882"/>
</dbReference>
<dbReference type="SMR" id="P10448"/>
<dbReference type="GlyCosmos" id="P10448">
    <property type="glycosylation" value="11 sites, No reported glycans"/>
</dbReference>
<dbReference type="GO" id="GO:0020002">
    <property type="term" value="C:host cell plasma membrane"/>
    <property type="evidence" value="ECO:0007669"/>
    <property type="project" value="UniProtKB-SubCell"/>
</dbReference>
<dbReference type="GO" id="GO:0016020">
    <property type="term" value="C:membrane"/>
    <property type="evidence" value="ECO:0007669"/>
    <property type="project" value="UniProtKB-KW"/>
</dbReference>
<dbReference type="GO" id="GO:0019031">
    <property type="term" value="C:viral envelope"/>
    <property type="evidence" value="ECO:0007669"/>
    <property type="project" value="UniProtKB-KW"/>
</dbReference>
<dbReference type="GO" id="GO:0055036">
    <property type="term" value="C:virion membrane"/>
    <property type="evidence" value="ECO:0007669"/>
    <property type="project" value="UniProtKB-SubCell"/>
</dbReference>
<dbReference type="GO" id="GO:0046789">
    <property type="term" value="F:host cell surface receptor binding"/>
    <property type="evidence" value="ECO:0007669"/>
    <property type="project" value="InterPro"/>
</dbReference>
<dbReference type="GO" id="GO:0075509">
    <property type="term" value="P:endocytosis involved in viral entry into host cell"/>
    <property type="evidence" value="ECO:0007669"/>
    <property type="project" value="UniProtKB-KW"/>
</dbReference>
<dbReference type="GO" id="GO:0039654">
    <property type="term" value="P:fusion of virus membrane with host endosome membrane"/>
    <property type="evidence" value="ECO:0007669"/>
    <property type="project" value="UniProtKB-KW"/>
</dbReference>
<dbReference type="GO" id="GO:0019064">
    <property type="term" value="P:fusion of virus membrane with host plasma membrane"/>
    <property type="evidence" value="ECO:0007669"/>
    <property type="project" value="InterPro"/>
</dbReference>
<dbReference type="GO" id="GO:0019062">
    <property type="term" value="P:virion attachment to host cell"/>
    <property type="evidence" value="ECO:0007669"/>
    <property type="project" value="UniProtKB-KW"/>
</dbReference>
<dbReference type="Gene3D" id="3.90.20.10">
    <property type="match status" value="1"/>
</dbReference>
<dbReference type="Gene3D" id="3.90.209.20">
    <property type="match status" value="1"/>
</dbReference>
<dbReference type="Gene3D" id="2.10.77.10">
    <property type="entry name" value="Hemagglutinin Chain A, Domain 2"/>
    <property type="match status" value="1"/>
</dbReference>
<dbReference type="HAMAP" id="MF_04072">
    <property type="entry name" value="INFV_HEMA"/>
    <property type="match status" value="1"/>
</dbReference>
<dbReference type="InterPro" id="IPR008980">
    <property type="entry name" value="Capsid_hemagglutn"/>
</dbReference>
<dbReference type="InterPro" id="IPR013828">
    <property type="entry name" value="Hemagglutn_HA1_a/b_dom_sf"/>
</dbReference>
<dbReference type="InterPro" id="IPR001364">
    <property type="entry name" value="Hemagglutn_influenz_A/B"/>
</dbReference>
<dbReference type="InterPro" id="IPR000386">
    <property type="entry name" value="Hemagglutn_influenz_B"/>
</dbReference>
<dbReference type="Pfam" id="PF00509">
    <property type="entry name" value="Hemagglutinin"/>
    <property type="match status" value="1"/>
</dbReference>
<dbReference type="PRINTS" id="PR00329">
    <property type="entry name" value="HEMAGGLUTN12"/>
</dbReference>
<dbReference type="PRINTS" id="PR00331">
    <property type="entry name" value="HEMAGGLUTN2"/>
</dbReference>
<dbReference type="SUPFAM" id="SSF58064">
    <property type="entry name" value="Influenza hemagglutinin (stalk)"/>
    <property type="match status" value="1"/>
</dbReference>
<dbReference type="SUPFAM" id="SSF49818">
    <property type="entry name" value="Viral protein domain"/>
    <property type="match status" value="1"/>
</dbReference>
<reference key="1">
    <citation type="submission" date="1989-01" db="EMBL/GenBank/DDBJ databases">
        <authorList>
            <person name="Ritchie L.R."/>
            <person name="Air G.M."/>
        </authorList>
    </citation>
    <scope>NUCLEOTIDE SEQUENCE [GENOMIC RNA]</scope>
</reference>